<evidence type="ECO:0000255" key="1">
    <source>
        <dbReference type="HAMAP-Rule" id="MF_00691"/>
    </source>
</evidence>
<gene>
    <name evidence="1" type="primary">pxpA1</name>
    <name type="ordered locus">PP_2920</name>
</gene>
<feature type="chain" id="PRO_0000185029" description="5-oxoprolinase subunit A 1">
    <location>
        <begin position="1"/>
        <end position="252"/>
    </location>
</feature>
<sequence length="252" mass="27611">MQAVDFNSDMGEGFGPWTIGDGVDNELMGYISSANIATGFHAGDPGTMRRTVERAKALGVAVGAHPGFRDLVGFGRRHINASAQELVDDMLYQLGALREIARAQGVRLQHIKPHGALYMHLARDEEAARLLVENLRVIEPELLLYCMPGSVICRIAQELGQPVIREFYADREYDLSGSIVFTRNVRGYEPQAVAERVLRACRQGVVRTVEGQDLAIEFDSICLHSDTPGALDLVEATRKALDAAGIVVRAPR</sequence>
<accession>Q88IS9</accession>
<dbReference type="EC" id="3.5.2.9" evidence="1"/>
<dbReference type="EMBL" id="AE015451">
    <property type="protein sequence ID" value="AAN68528.1"/>
    <property type="molecule type" value="Genomic_DNA"/>
</dbReference>
<dbReference type="RefSeq" id="NP_745064.1">
    <property type="nucleotide sequence ID" value="NC_002947.4"/>
</dbReference>
<dbReference type="RefSeq" id="WP_010953822.1">
    <property type="nucleotide sequence ID" value="NZ_CP169744.1"/>
</dbReference>
<dbReference type="SMR" id="Q88IS9"/>
<dbReference type="STRING" id="160488.PP_2920"/>
<dbReference type="PaxDb" id="160488-PP_2920"/>
<dbReference type="KEGG" id="ppu:PP_2920"/>
<dbReference type="PATRIC" id="fig|160488.4.peg.3093"/>
<dbReference type="eggNOG" id="COG1540">
    <property type="taxonomic scope" value="Bacteria"/>
</dbReference>
<dbReference type="HOGENOM" id="CLU_069535_0_0_6"/>
<dbReference type="OrthoDB" id="9773478at2"/>
<dbReference type="PhylomeDB" id="Q88IS9"/>
<dbReference type="BioCyc" id="PPUT160488:G1G01-3098-MONOMER"/>
<dbReference type="Proteomes" id="UP000000556">
    <property type="component" value="Chromosome"/>
</dbReference>
<dbReference type="GO" id="GO:0017168">
    <property type="term" value="F:5-oxoprolinase (ATP-hydrolyzing) activity"/>
    <property type="evidence" value="ECO:0007669"/>
    <property type="project" value="UniProtKB-UniRule"/>
</dbReference>
<dbReference type="GO" id="GO:0005524">
    <property type="term" value="F:ATP binding"/>
    <property type="evidence" value="ECO:0007669"/>
    <property type="project" value="UniProtKB-UniRule"/>
</dbReference>
<dbReference type="GO" id="GO:0005975">
    <property type="term" value="P:carbohydrate metabolic process"/>
    <property type="evidence" value="ECO:0007669"/>
    <property type="project" value="InterPro"/>
</dbReference>
<dbReference type="Gene3D" id="3.20.20.370">
    <property type="entry name" value="Glycoside hydrolase/deacetylase"/>
    <property type="match status" value="1"/>
</dbReference>
<dbReference type="HAMAP" id="MF_00691">
    <property type="entry name" value="PxpA"/>
    <property type="match status" value="1"/>
</dbReference>
<dbReference type="InterPro" id="IPR011330">
    <property type="entry name" value="Glyco_hydro/deAcase_b/a-brl"/>
</dbReference>
<dbReference type="InterPro" id="IPR005501">
    <property type="entry name" value="LamB/YcsF/PxpA-like"/>
</dbReference>
<dbReference type="NCBIfam" id="NF003814">
    <property type="entry name" value="PRK05406.1-3"/>
    <property type="match status" value="1"/>
</dbReference>
<dbReference type="NCBIfam" id="NF003816">
    <property type="entry name" value="PRK05406.1-5"/>
    <property type="match status" value="1"/>
</dbReference>
<dbReference type="PANTHER" id="PTHR30292:SF0">
    <property type="entry name" value="5-OXOPROLINASE SUBUNIT A"/>
    <property type="match status" value="1"/>
</dbReference>
<dbReference type="PANTHER" id="PTHR30292">
    <property type="entry name" value="UNCHARACTERIZED PROTEIN YBGL-RELATED"/>
    <property type="match status" value="1"/>
</dbReference>
<dbReference type="Pfam" id="PF03746">
    <property type="entry name" value="LamB_YcsF"/>
    <property type="match status" value="1"/>
</dbReference>
<dbReference type="SUPFAM" id="SSF88713">
    <property type="entry name" value="Glycoside hydrolase/deacetylase"/>
    <property type="match status" value="1"/>
</dbReference>
<keyword id="KW-0067">ATP-binding</keyword>
<keyword id="KW-0378">Hydrolase</keyword>
<keyword id="KW-0547">Nucleotide-binding</keyword>
<keyword id="KW-1185">Reference proteome</keyword>
<reference key="1">
    <citation type="journal article" date="2002" name="Environ. Microbiol.">
        <title>Complete genome sequence and comparative analysis of the metabolically versatile Pseudomonas putida KT2440.</title>
        <authorList>
            <person name="Nelson K.E."/>
            <person name="Weinel C."/>
            <person name="Paulsen I.T."/>
            <person name="Dodson R.J."/>
            <person name="Hilbert H."/>
            <person name="Martins dos Santos V.A.P."/>
            <person name="Fouts D.E."/>
            <person name="Gill S.R."/>
            <person name="Pop M."/>
            <person name="Holmes M."/>
            <person name="Brinkac L.M."/>
            <person name="Beanan M.J."/>
            <person name="DeBoy R.T."/>
            <person name="Daugherty S.C."/>
            <person name="Kolonay J.F."/>
            <person name="Madupu R."/>
            <person name="Nelson W.C."/>
            <person name="White O."/>
            <person name="Peterson J.D."/>
            <person name="Khouri H.M."/>
            <person name="Hance I."/>
            <person name="Chris Lee P."/>
            <person name="Holtzapple E.K."/>
            <person name="Scanlan D."/>
            <person name="Tran K."/>
            <person name="Moazzez A."/>
            <person name="Utterback T.R."/>
            <person name="Rizzo M."/>
            <person name="Lee K."/>
            <person name="Kosack D."/>
            <person name="Moestl D."/>
            <person name="Wedler H."/>
            <person name="Lauber J."/>
            <person name="Stjepandic D."/>
            <person name="Hoheisel J."/>
            <person name="Straetz M."/>
            <person name="Heim S."/>
            <person name="Kiewitz C."/>
            <person name="Eisen J.A."/>
            <person name="Timmis K.N."/>
            <person name="Duesterhoeft A."/>
            <person name="Tuemmler B."/>
            <person name="Fraser C.M."/>
        </authorList>
    </citation>
    <scope>NUCLEOTIDE SEQUENCE [LARGE SCALE GENOMIC DNA]</scope>
    <source>
        <strain>ATCC 47054 / DSM 6125 / CFBP 8728 / NCIMB 11950 / KT2440</strain>
    </source>
</reference>
<protein>
    <recommendedName>
        <fullName evidence="1">5-oxoprolinase subunit A 1</fullName>
        <shortName evidence="1">5-OPase subunit A 1</shortName>
        <ecNumber evidence="1">3.5.2.9</ecNumber>
    </recommendedName>
    <alternativeName>
        <fullName evidence="1">5-oxoprolinase (ATP-hydrolyzing) subunit A 1</fullName>
    </alternativeName>
</protein>
<name>PXPA1_PSEPK</name>
<proteinExistence type="inferred from homology"/>
<organism>
    <name type="scientific">Pseudomonas putida (strain ATCC 47054 / DSM 6125 / CFBP 8728 / NCIMB 11950 / KT2440)</name>
    <dbReference type="NCBI Taxonomy" id="160488"/>
    <lineage>
        <taxon>Bacteria</taxon>
        <taxon>Pseudomonadati</taxon>
        <taxon>Pseudomonadota</taxon>
        <taxon>Gammaproteobacteria</taxon>
        <taxon>Pseudomonadales</taxon>
        <taxon>Pseudomonadaceae</taxon>
        <taxon>Pseudomonas</taxon>
    </lineage>
</organism>
<comment type="function">
    <text evidence="1">Catalyzes the cleavage of 5-oxoproline to form L-glutamate coupled to the hydrolysis of ATP to ADP and inorganic phosphate.</text>
</comment>
<comment type="catalytic activity">
    <reaction evidence="1">
        <text>5-oxo-L-proline + ATP + 2 H2O = L-glutamate + ADP + phosphate + H(+)</text>
        <dbReference type="Rhea" id="RHEA:10348"/>
        <dbReference type="ChEBI" id="CHEBI:15377"/>
        <dbReference type="ChEBI" id="CHEBI:15378"/>
        <dbReference type="ChEBI" id="CHEBI:29985"/>
        <dbReference type="ChEBI" id="CHEBI:30616"/>
        <dbReference type="ChEBI" id="CHEBI:43474"/>
        <dbReference type="ChEBI" id="CHEBI:58402"/>
        <dbReference type="ChEBI" id="CHEBI:456216"/>
        <dbReference type="EC" id="3.5.2.9"/>
    </reaction>
</comment>
<comment type="subunit">
    <text evidence="1">Forms a complex composed of PxpA, PxpB and PxpC.</text>
</comment>
<comment type="similarity">
    <text evidence="1">Belongs to the LamB/PxpA family.</text>
</comment>